<evidence type="ECO:0000250" key="1">
    <source>
        <dbReference type="UniProtKB" id="P11384"/>
    </source>
</evidence>
<evidence type="ECO:0000250" key="2">
    <source>
        <dbReference type="UniProtKB" id="P47872"/>
    </source>
</evidence>
<evidence type="ECO:0000250" key="3">
    <source>
        <dbReference type="UniProtKB" id="Q5FWI2"/>
    </source>
</evidence>
<evidence type="ECO:0000255" key="4"/>
<evidence type="ECO:0000256" key="5">
    <source>
        <dbReference type="SAM" id="MobiDB-lite"/>
    </source>
</evidence>
<evidence type="ECO:0000269" key="6">
    <source>
    </source>
</evidence>
<evidence type="ECO:0000269" key="7">
    <source>
    </source>
</evidence>
<evidence type="ECO:0000269" key="8">
    <source>
    </source>
</evidence>
<evidence type="ECO:0000269" key="9">
    <source>
    </source>
</evidence>
<evidence type="ECO:0000303" key="10">
    <source>
    </source>
</evidence>
<evidence type="ECO:0000303" key="11">
    <source>
    </source>
</evidence>
<evidence type="ECO:0000305" key="12"/>
<evidence type="ECO:0000312" key="13">
    <source>
        <dbReference type="RGD" id="621342"/>
    </source>
</evidence>
<reference key="1">
    <citation type="journal article" date="1991" name="EMBO J.">
        <title>Molecular cloning and expression of a cDNA encoding the secretin receptor.</title>
        <authorList>
            <person name="Ishihara T."/>
            <person name="Nakamura S."/>
            <person name="Kaziro Y."/>
            <person name="Takahashi T."/>
            <person name="Takahashi K."/>
            <person name="Nagata S."/>
        </authorList>
    </citation>
    <scope>NUCLEOTIDE SEQUENCE [MRNA]</scope>
    <scope>FUNCTION</scope>
</reference>
<reference key="2">
    <citation type="journal article" date="2004" name="Genome Res.">
        <title>The status, quality, and expansion of the NIH full-length cDNA project: the Mammalian Gene Collection (MGC).</title>
        <authorList>
            <consortium name="The MGC Project Team"/>
        </authorList>
    </citation>
    <scope>NUCLEOTIDE SEQUENCE [LARGE SCALE MRNA]</scope>
    <source>
        <tissue>Heart</tissue>
    </source>
</reference>
<reference key="3">
    <citation type="journal article" date="1995" name="Mol. Pharmacol.">
        <title>Agonist-stimulated phosphorylation of the carboxyl-terminal tail of the secretin receptor.</title>
        <authorList>
            <person name="Ozcelebi F."/>
            <person name="Holtmann M.H."/>
            <person name="Rentsch R.U."/>
            <person name="Rao R."/>
            <person name="Miller L.J."/>
        </authorList>
    </citation>
    <scope>SUBCELLULAR LOCATION</scope>
    <scope>GLYCOSYLATION</scope>
    <scope>PHOSPHORYLATION</scope>
</reference>
<reference key="4">
    <citation type="journal article" date="1998" name="J. Biol. Chem.">
        <title>A role for receptor kinases in the regulation of class II G protein-coupled receptors. Phosphorylation and desensitization of the secretin receptor.</title>
        <authorList>
            <person name="Shetzline M.A."/>
            <person name="Premont R.T."/>
            <person name="Walker J.K."/>
            <person name="Vigna S.R."/>
            <person name="Caron M.G."/>
        </authorList>
    </citation>
    <scope>FUNCTION</scope>
    <scope>SUBCELLULAR LOCATION</scope>
    <scope>PHOSPHORYLATION</scope>
</reference>
<reference key="5">
    <citation type="journal article" date="2002" name="Mol. Endocrinol.">
        <title>Interaction among four residues distributed through the secretin pharmacophore and a focused region of the secretin receptor amino terminus.</title>
        <authorList>
            <person name="Dong M."/>
            <person name="Zang M."/>
            <person name="Pinon D.I."/>
            <person name="Li Z."/>
            <person name="Lybrand T.P."/>
            <person name="Miller L.J."/>
        </authorList>
    </citation>
    <scope>FUNCTION</scope>
    <scope>MUTAGENESIS OF ARG-36 AND ARG-37</scope>
</reference>
<reference key="6">
    <citation type="journal article" date="2004" name="Neurosci. Lett.">
        <title>Age-related and regional differences in secretin and secretin receptor mRNA levels in the rat brain.</title>
        <authorList>
            <person name="Tay J."/>
            <person name="Goulet M."/>
            <person name="Rusche J."/>
            <person name="Boismenu R."/>
        </authorList>
    </citation>
    <scope>TISSUE SPECIFICITY</scope>
</reference>
<reference key="7">
    <citation type="journal article" date="2013" name="Ann. Transl. Med.">
        <title>The physiological roles of secretin and its receptor.</title>
        <authorList>
            <person name="Afroze S."/>
            <person name="Meng F."/>
            <person name="Jensen K."/>
            <person name="McDaniel K."/>
            <person name="Rahal K."/>
            <person name="Onori P."/>
            <person name="Gaudio E."/>
            <person name="Alpini G."/>
            <person name="Glaser S.S."/>
        </authorList>
    </citation>
    <scope>REVIEW</scope>
</reference>
<organism>
    <name type="scientific">Rattus norvegicus</name>
    <name type="common">Rat</name>
    <dbReference type="NCBI Taxonomy" id="10116"/>
    <lineage>
        <taxon>Eukaryota</taxon>
        <taxon>Metazoa</taxon>
        <taxon>Chordata</taxon>
        <taxon>Craniata</taxon>
        <taxon>Vertebrata</taxon>
        <taxon>Euteleostomi</taxon>
        <taxon>Mammalia</taxon>
        <taxon>Eutheria</taxon>
        <taxon>Euarchontoglires</taxon>
        <taxon>Glires</taxon>
        <taxon>Rodentia</taxon>
        <taxon>Myomorpha</taxon>
        <taxon>Muroidea</taxon>
        <taxon>Muridae</taxon>
        <taxon>Murinae</taxon>
        <taxon>Rattus</taxon>
    </lineage>
</organism>
<keyword id="KW-1003">Cell membrane</keyword>
<keyword id="KW-1015">Disulfide bond</keyword>
<keyword id="KW-0297">G-protein coupled receptor</keyword>
<keyword id="KW-0325">Glycoprotein</keyword>
<keyword id="KW-0472">Membrane</keyword>
<keyword id="KW-0597">Phosphoprotein</keyword>
<keyword id="KW-0675">Receptor</keyword>
<keyword id="KW-1185">Reference proteome</keyword>
<keyword id="KW-0732">Signal</keyword>
<keyword id="KW-0807">Transducer</keyword>
<keyword id="KW-0812">Transmembrane</keyword>
<keyword id="KW-1133">Transmembrane helix</keyword>
<proteinExistence type="evidence at protein level"/>
<gene>
    <name evidence="13" type="primary">Sctr</name>
</gene>
<accession>P23811</accession>
<dbReference type="EMBL" id="X59132">
    <property type="protein sequence ID" value="CAA41849.1"/>
    <property type="molecule type" value="mRNA"/>
</dbReference>
<dbReference type="EMBL" id="BC081781">
    <property type="protein sequence ID" value="AAH81781.1"/>
    <property type="molecule type" value="mRNA"/>
</dbReference>
<dbReference type="PIR" id="S16319">
    <property type="entry name" value="S16319"/>
</dbReference>
<dbReference type="RefSeq" id="NP_112377.1">
    <property type="nucleotide sequence ID" value="NM_031115.1"/>
</dbReference>
<dbReference type="SMR" id="P23811"/>
<dbReference type="BioGRID" id="249651">
    <property type="interactions" value="1"/>
</dbReference>
<dbReference type="FunCoup" id="P23811">
    <property type="interactions" value="32"/>
</dbReference>
<dbReference type="STRING" id="10116.ENSRNOP00000064579"/>
<dbReference type="GuidetoPHARMACOLOGY" id="252"/>
<dbReference type="GlyCosmos" id="P23811">
    <property type="glycosylation" value="5 sites, No reported glycans"/>
</dbReference>
<dbReference type="GlyGen" id="P23811">
    <property type="glycosylation" value="5 sites"/>
</dbReference>
<dbReference type="PhosphoSitePlus" id="P23811"/>
<dbReference type="PaxDb" id="10116-ENSRNOP00000064579"/>
<dbReference type="Ensembl" id="ENSRNOT00000119589.1">
    <property type="protein sequence ID" value="ENSRNOP00000092013.1"/>
    <property type="gene ID" value="ENSRNOG00000049766.3"/>
</dbReference>
<dbReference type="GeneID" id="81779"/>
<dbReference type="KEGG" id="rno:81779"/>
<dbReference type="AGR" id="RGD:621342"/>
<dbReference type="CTD" id="6344"/>
<dbReference type="RGD" id="621342">
    <property type="gene designation" value="Sctr"/>
</dbReference>
<dbReference type="eggNOG" id="KOG4564">
    <property type="taxonomic scope" value="Eukaryota"/>
</dbReference>
<dbReference type="GeneTree" id="ENSGT00940000160618"/>
<dbReference type="InParanoid" id="P23811"/>
<dbReference type="OrthoDB" id="6433780at2759"/>
<dbReference type="PhylomeDB" id="P23811"/>
<dbReference type="Reactome" id="R-RNO-420092">
    <property type="pathway name" value="Glucagon-type ligand receptors"/>
</dbReference>
<dbReference type="PRO" id="PR:P23811"/>
<dbReference type="Proteomes" id="UP000002494">
    <property type="component" value="Chromosome 13"/>
</dbReference>
<dbReference type="GO" id="GO:0016323">
    <property type="term" value="C:basolateral plasma membrane"/>
    <property type="evidence" value="ECO:0007669"/>
    <property type="project" value="UniProtKB-SubCell"/>
</dbReference>
<dbReference type="GO" id="GO:0005881">
    <property type="term" value="C:cytoplasmic microtubule"/>
    <property type="evidence" value="ECO:0000250"/>
    <property type="project" value="UniProtKB"/>
</dbReference>
<dbReference type="GO" id="GO:0005886">
    <property type="term" value="C:plasma membrane"/>
    <property type="evidence" value="ECO:0000318"/>
    <property type="project" value="GO_Central"/>
</dbReference>
<dbReference type="GO" id="GO:0008528">
    <property type="term" value="F:G protein-coupled peptide receptor activity"/>
    <property type="evidence" value="ECO:0000318"/>
    <property type="project" value="GO_Central"/>
</dbReference>
<dbReference type="GO" id="GO:0042277">
    <property type="term" value="F:peptide binding"/>
    <property type="evidence" value="ECO:0000314"/>
    <property type="project" value="RGD"/>
</dbReference>
<dbReference type="GO" id="GO:0017046">
    <property type="term" value="F:peptide hormone binding"/>
    <property type="evidence" value="ECO:0000266"/>
    <property type="project" value="RGD"/>
</dbReference>
<dbReference type="GO" id="GO:0015055">
    <property type="term" value="F:secretin receptor activity"/>
    <property type="evidence" value="ECO:0000314"/>
    <property type="project" value="RGD"/>
</dbReference>
<dbReference type="GO" id="GO:0007189">
    <property type="term" value="P:adenylate cyclase-activating G protein-coupled receptor signaling pathway"/>
    <property type="evidence" value="ECO:0000250"/>
    <property type="project" value="UniProtKB"/>
</dbReference>
<dbReference type="GO" id="GO:0007188">
    <property type="term" value="P:adenylate cyclase-modulating G protein-coupled receptor signaling pathway"/>
    <property type="evidence" value="ECO:0000318"/>
    <property type="project" value="GO_Central"/>
</dbReference>
<dbReference type="GO" id="GO:0007166">
    <property type="term" value="P:cell surface receptor signaling pathway"/>
    <property type="evidence" value="ECO:0007669"/>
    <property type="project" value="InterPro"/>
</dbReference>
<dbReference type="GO" id="GO:0002024">
    <property type="term" value="P:diet induced thermogenesis"/>
    <property type="evidence" value="ECO:0000250"/>
    <property type="project" value="UniProtKB"/>
</dbReference>
<dbReference type="GO" id="GO:0007186">
    <property type="term" value="P:G protein-coupled receptor signaling pathway"/>
    <property type="evidence" value="ECO:0000266"/>
    <property type="project" value="RGD"/>
</dbReference>
<dbReference type="GO" id="GO:0009992">
    <property type="term" value="P:intracellular water homeostasis"/>
    <property type="evidence" value="ECO:0000250"/>
    <property type="project" value="UniProtKB"/>
</dbReference>
<dbReference type="GO" id="GO:0050996">
    <property type="term" value="P:positive regulation of lipid catabolic process"/>
    <property type="evidence" value="ECO:0000266"/>
    <property type="project" value="RGD"/>
</dbReference>
<dbReference type="GO" id="GO:0032098">
    <property type="term" value="P:regulation of appetite"/>
    <property type="evidence" value="ECO:0000250"/>
    <property type="project" value="UniProtKB"/>
</dbReference>
<dbReference type="GO" id="GO:0141161">
    <property type="term" value="P:regulation of cAMP/PKA signal transduction"/>
    <property type="evidence" value="ECO:0000315"/>
    <property type="project" value="RGD"/>
</dbReference>
<dbReference type="GO" id="GO:0048167">
    <property type="term" value="P:regulation of synaptic plasticity"/>
    <property type="evidence" value="ECO:0000250"/>
    <property type="project" value="UniProtKB"/>
</dbReference>
<dbReference type="GO" id="GO:0070295">
    <property type="term" value="P:renal water absorption"/>
    <property type="evidence" value="ECO:0000266"/>
    <property type="project" value="RGD"/>
</dbReference>
<dbReference type="GO" id="GO:0031667">
    <property type="term" value="P:response to nutrient levels"/>
    <property type="evidence" value="ECO:0000250"/>
    <property type="project" value="UniProtKB"/>
</dbReference>
<dbReference type="CDD" id="cd15275">
    <property type="entry name" value="7tmB1_secretin"/>
    <property type="match status" value="1"/>
</dbReference>
<dbReference type="FunFam" id="4.10.1240.10:FF:000018">
    <property type="entry name" value="Secretin receptor"/>
    <property type="match status" value="1"/>
</dbReference>
<dbReference type="FunFam" id="1.20.1070.10:FF:000032">
    <property type="entry name" value="Vasoactive intestinal polypeptide receptor 1"/>
    <property type="match status" value="1"/>
</dbReference>
<dbReference type="Gene3D" id="4.10.1240.10">
    <property type="entry name" value="GPCR, family 2, extracellular hormone receptor domain"/>
    <property type="match status" value="1"/>
</dbReference>
<dbReference type="Gene3D" id="1.20.1070.10">
    <property type="entry name" value="Rhodopsin 7-helix transmembrane proteins"/>
    <property type="match status" value="1"/>
</dbReference>
<dbReference type="InterPro" id="IPR050332">
    <property type="entry name" value="GPCR_2"/>
</dbReference>
<dbReference type="InterPro" id="IPR017981">
    <property type="entry name" value="GPCR_2-like_7TM"/>
</dbReference>
<dbReference type="InterPro" id="IPR036445">
    <property type="entry name" value="GPCR_2_extracell_dom_sf"/>
</dbReference>
<dbReference type="InterPro" id="IPR001879">
    <property type="entry name" value="GPCR_2_extracellular_dom"/>
</dbReference>
<dbReference type="InterPro" id="IPR000832">
    <property type="entry name" value="GPCR_2_secretin-like"/>
</dbReference>
<dbReference type="InterPro" id="IPR017983">
    <property type="entry name" value="GPCR_2_secretin-like_CS"/>
</dbReference>
<dbReference type="InterPro" id="IPR002144">
    <property type="entry name" value="GPCR_2_secretin_rcpt"/>
</dbReference>
<dbReference type="InterPro" id="IPR047037">
    <property type="entry name" value="Secretin_7TM"/>
</dbReference>
<dbReference type="PANTHER" id="PTHR45620">
    <property type="entry name" value="PDF RECEPTOR-LIKE PROTEIN-RELATED"/>
    <property type="match status" value="1"/>
</dbReference>
<dbReference type="PANTHER" id="PTHR45620:SF13">
    <property type="entry name" value="SECRETIN RECEPTOR"/>
    <property type="match status" value="1"/>
</dbReference>
<dbReference type="Pfam" id="PF00002">
    <property type="entry name" value="7tm_2"/>
    <property type="match status" value="1"/>
</dbReference>
<dbReference type="Pfam" id="PF02793">
    <property type="entry name" value="HRM"/>
    <property type="match status" value="1"/>
</dbReference>
<dbReference type="PRINTS" id="PR00249">
    <property type="entry name" value="GPCRSECRETIN"/>
</dbReference>
<dbReference type="PRINTS" id="PR00490">
    <property type="entry name" value="SECRETINR"/>
</dbReference>
<dbReference type="SMART" id="SM00008">
    <property type="entry name" value="HormR"/>
    <property type="match status" value="1"/>
</dbReference>
<dbReference type="SUPFAM" id="SSF81321">
    <property type="entry name" value="Family A G protein-coupled receptor-like"/>
    <property type="match status" value="1"/>
</dbReference>
<dbReference type="SUPFAM" id="SSF111418">
    <property type="entry name" value="Hormone receptor domain"/>
    <property type="match status" value="1"/>
</dbReference>
<dbReference type="PROSITE" id="PS00649">
    <property type="entry name" value="G_PROTEIN_RECEP_F2_1"/>
    <property type="match status" value="1"/>
</dbReference>
<dbReference type="PROSITE" id="PS00650">
    <property type="entry name" value="G_PROTEIN_RECEP_F2_2"/>
    <property type="match status" value="1"/>
</dbReference>
<dbReference type="PROSITE" id="PS50227">
    <property type="entry name" value="G_PROTEIN_RECEP_F2_3"/>
    <property type="match status" value="1"/>
</dbReference>
<dbReference type="PROSITE" id="PS50261">
    <property type="entry name" value="G_PROTEIN_RECEP_F2_4"/>
    <property type="match status" value="1"/>
</dbReference>
<sequence length="449" mass="51234">MLSTMRPRLSLLLLRLLLLTKAAHTVGVPPRLCDVRRVLLEERAHCLQQLSKEKKGALGPETASGCEGLWDNMSCWPSSAPARTVEVQCPKFLLMLSNKNGSLFRNCTQDGWSETFPRPDLACGVNINNSFNERRHAYLLKLKVMYTVGYSSSLAMLLVALSILCSFRRLHCTRNYIHMHLFVSFILRALSNFIKDAVLFSSDDVTYCDAHKVGCKLVMIFFQYCIMANYAWLLVEGLYLHTLLAISFFSERKYLQAFVLLGWGSPAIFVALWAITRHFLENTGCWDINANASVWWVIRGPVILSILINFIFFINILRILMRKLRTQETRGSETNHYKRLAKSTLLLIPLFGIHYIVFAFSPEDAMEVQLFFELALGSFQGLVVAVLYCFLNGEVQLEVQKKWRQWHLQEFPLRPVAFNNSFSNATNGPTHSTKASTEQSRSIPRASII</sequence>
<protein>
    <recommendedName>
        <fullName evidence="10">Secretin receptor</fullName>
        <shortName>SCT-R</shortName>
    </recommendedName>
</protein>
<comment type="function">
    <text evidence="1 3 6 9 11">G protein-coupled receptor activated by secretin (SCT), which is involved in different processes such as regulation of the pH of the duodenal content, food intake and water homeostasis (PubMed:12403838, PubMed:25332973). Ligand binding causes a conformation change that triggers signaling via guanine nucleotide-binding proteins (G proteins) and activates cAMP-dependent pathway (PubMed:12403838, PubMed:9506976). Upon binding to secretin, regulates the pH of the duodenum by (1) inhibiting the secretion of gastric acid from the parietal cells of the stomach and (2) stimulating the production of bicarbonate (NaHCO(3)) from the ductal cells of the pancreas (By similarity). In addition to regulating the pH of the duodenal content, plays a central role in diet induced thermogenesis: acts as a non-sympathetic brown fat (BAT) activator mediating prandial thermogenesis, which consequentially induces satiation. Mechanistically, secretin released by the gut after a meal binds to secretin receptor (SCTR) in brown adipocytes, activating brown fat thermogenesis by stimulating lipolysis, which is sensed in the brain and promotes satiation. Also able to stimulate lipolysis in white adipocytes. Also plays an important role in cellular osmoregulation by regulating renal water reabsorption. Also plays a role in the central nervous system: required for synaptic plasticity (By similarity).</text>
</comment>
<comment type="subcellular location">
    <subcellularLocation>
        <location evidence="8 9">Cell membrane</location>
        <topology evidence="2">Multi-pass membrane protein</topology>
    </subcellularLocation>
    <subcellularLocation>
        <location evidence="3">Basolateral cell membrane</location>
        <topology evidence="2">Multi-pass membrane protein</topology>
    </subcellularLocation>
</comment>
<comment type="tissue specificity">
    <text evidence="7">In the brain, expressed in the central amygdala, hippocampus, area postrema, nucleus of the tractus solitary and cerebellum.</text>
</comment>
<comment type="PTM">
    <text evidence="8 9">Phosphorylated on Ser and Thr residues at the cytoplasmic C-terminus by G protein-coupled receptor kinases (GRKs).</text>
</comment>
<comment type="PTM">
    <text evidence="8">N-glycosylated.</text>
</comment>
<comment type="similarity">
    <text evidence="12">Belongs to the G-protein coupled receptor 2 family.</text>
</comment>
<feature type="signal peptide" evidence="4">
    <location>
        <begin position="1"/>
        <end position="25"/>
    </location>
</feature>
<feature type="chain" id="PRO_0000012854" description="Secretin receptor">
    <location>
        <begin position="26"/>
        <end position="449"/>
    </location>
</feature>
<feature type="topological domain" description="Extracellular" evidence="12">
    <location>
        <begin position="26"/>
        <end position="141"/>
    </location>
</feature>
<feature type="transmembrane region" description="Helical; Name=1" evidence="2">
    <location>
        <begin position="142"/>
        <end position="167"/>
    </location>
</feature>
<feature type="topological domain" description="Cytoplasmic" evidence="12">
    <location>
        <begin position="168"/>
        <end position="174"/>
    </location>
</feature>
<feature type="transmembrane region" description="Helical; Name=2" evidence="2">
    <location>
        <begin position="175"/>
        <end position="195"/>
    </location>
</feature>
<feature type="topological domain" description="Extracellular" evidence="12">
    <location>
        <begin position="196"/>
        <end position="216"/>
    </location>
</feature>
<feature type="transmembrane region" description="Helical; Name=3" evidence="2">
    <location>
        <begin position="217"/>
        <end position="239"/>
    </location>
</feature>
<feature type="topological domain" description="Cytoplasmic" evidence="12">
    <location>
        <begin position="240"/>
        <end position="254"/>
    </location>
</feature>
<feature type="transmembrane region" description="Helical; Name=4" evidence="2">
    <location>
        <begin position="255"/>
        <end position="276"/>
    </location>
</feature>
<feature type="topological domain" description="Extracellular" evidence="12">
    <location>
        <begin position="277"/>
        <end position="291"/>
    </location>
</feature>
<feature type="transmembrane region" description="Helical; Name=5" evidence="2">
    <location>
        <begin position="292"/>
        <end position="315"/>
    </location>
</feature>
<feature type="topological domain" description="Cytoplasmic" evidence="12">
    <location>
        <begin position="316"/>
        <end position="340"/>
    </location>
</feature>
<feature type="transmembrane region" description="Helical; Name=6" evidence="2">
    <location>
        <begin position="341"/>
        <end position="356"/>
    </location>
</feature>
<feature type="topological domain" description="Extracellular" evidence="12">
    <location>
        <begin position="357"/>
        <end position="367"/>
    </location>
</feature>
<feature type="transmembrane region" description="Helical; Name=7" evidence="2">
    <location>
        <begin position="368"/>
        <end position="391"/>
    </location>
</feature>
<feature type="topological domain" description="Cytoplasmic" evidence="12">
    <location>
        <begin position="392"/>
        <end position="449"/>
    </location>
</feature>
<feature type="region of interest" description="Disordered" evidence="5">
    <location>
        <begin position="425"/>
        <end position="449"/>
    </location>
</feature>
<feature type="compositionally biased region" description="Polar residues" evidence="5">
    <location>
        <begin position="425"/>
        <end position="442"/>
    </location>
</feature>
<feature type="glycosylation site" description="N-linked (GlcNAc...) asparagine" evidence="4">
    <location>
        <position position="72"/>
    </location>
</feature>
<feature type="glycosylation site" description="N-linked (GlcNAc...) asparagine" evidence="4">
    <location>
        <position position="100"/>
    </location>
</feature>
<feature type="glycosylation site" description="N-linked (GlcNAc...) asparagine" evidence="4">
    <location>
        <position position="106"/>
    </location>
</feature>
<feature type="glycosylation site" description="N-linked (GlcNAc...) asparagine" evidence="4">
    <location>
        <position position="128"/>
    </location>
</feature>
<feature type="glycosylation site" description="N-linked (GlcNAc...) asparagine" evidence="4">
    <location>
        <position position="291"/>
    </location>
</feature>
<feature type="disulfide bond" evidence="2">
    <location>
        <begin position="46"/>
        <end position="75"/>
    </location>
</feature>
<feature type="disulfide bond" evidence="2">
    <location>
        <begin position="66"/>
        <end position="107"/>
    </location>
</feature>
<feature type="disulfide bond" evidence="2">
    <location>
        <begin position="89"/>
        <end position="123"/>
    </location>
</feature>
<feature type="disulfide bond" evidence="2">
    <location>
        <begin position="215"/>
        <end position="285"/>
    </location>
</feature>
<feature type="mutagenesis site" description="Strong reduction in secretin (SCT)-binding." evidence="6">
    <original>R</original>
    <variation>A</variation>
    <location>
        <position position="36"/>
    </location>
</feature>
<feature type="mutagenesis site" description="Reduction in secretin (SCT)-binding." evidence="6">
    <original>R</original>
    <variation>A</variation>
    <location>
        <position position="37"/>
    </location>
</feature>
<name>SCTR_RAT</name>